<reference key="1">
    <citation type="submission" date="2007-03" db="EMBL/GenBank/DDBJ databases">
        <authorList>
            <person name="Heidelberg J."/>
        </authorList>
    </citation>
    <scope>NUCLEOTIDE SEQUENCE [LARGE SCALE GENOMIC DNA]</scope>
    <source>
        <strain>ATCC 39541 / Classical Ogawa 395 / O395</strain>
    </source>
</reference>
<reference key="2">
    <citation type="journal article" date="2008" name="PLoS ONE">
        <title>A recalibrated molecular clock and independent origins for the cholera pandemic clones.</title>
        <authorList>
            <person name="Feng L."/>
            <person name="Reeves P.R."/>
            <person name="Lan R."/>
            <person name="Ren Y."/>
            <person name="Gao C."/>
            <person name="Zhou Z."/>
            <person name="Ren Y."/>
            <person name="Cheng J."/>
            <person name="Wang W."/>
            <person name="Wang J."/>
            <person name="Qian W."/>
            <person name="Li D."/>
            <person name="Wang L."/>
        </authorList>
    </citation>
    <scope>NUCLEOTIDE SEQUENCE [LARGE SCALE GENOMIC DNA]</scope>
    <source>
        <strain>ATCC 39541 / Classical Ogawa 395 / O395</strain>
    </source>
</reference>
<name>FABV_VIBC3</name>
<proteinExistence type="inferred from homology"/>
<feature type="chain" id="PRO_1000073689" description="Enoyl-[acyl-carrier-protein] reductase [NADH]">
    <location>
        <begin position="1"/>
        <end position="402"/>
    </location>
</feature>
<feature type="active site" description="Proton donor" evidence="1">
    <location>
        <position position="241"/>
    </location>
</feature>
<feature type="binding site" evidence="1">
    <location>
        <begin position="48"/>
        <end position="53"/>
    </location>
    <ligand>
        <name>NAD(+)</name>
        <dbReference type="ChEBI" id="CHEBI:57540"/>
    </ligand>
</feature>
<feature type="binding site" evidence="1">
    <location>
        <begin position="75"/>
        <end position="76"/>
    </location>
    <ligand>
        <name>NAD(+)</name>
        <dbReference type="ChEBI" id="CHEBI:57540"/>
    </ligand>
</feature>
<feature type="binding site" evidence="1">
    <location>
        <begin position="112"/>
        <end position="113"/>
    </location>
    <ligand>
        <name>NAD(+)</name>
        <dbReference type="ChEBI" id="CHEBI:57540"/>
    </ligand>
</feature>
<feature type="binding site" evidence="1">
    <location>
        <begin position="141"/>
        <end position="142"/>
    </location>
    <ligand>
        <name>NAD(+)</name>
        <dbReference type="ChEBI" id="CHEBI:57540"/>
    </ligand>
</feature>
<feature type="binding site" evidence="1">
    <location>
        <position position="231"/>
    </location>
    <ligand>
        <name>substrate</name>
    </ligand>
</feature>
<feature type="binding site" evidence="1">
    <location>
        <position position="250"/>
    </location>
    <ligand>
        <name>NAD(+)</name>
        <dbReference type="ChEBI" id="CHEBI:57540"/>
    </ligand>
</feature>
<feature type="binding site" evidence="1">
    <location>
        <begin position="279"/>
        <end position="281"/>
    </location>
    <ligand>
        <name>NAD(+)</name>
        <dbReference type="ChEBI" id="CHEBI:57540"/>
    </ligand>
</feature>
<feature type="site" description="Plays an important role in discriminating NADH against NADPH" evidence="1">
    <location>
        <position position="76"/>
    </location>
</feature>
<gene>
    <name evidence="1" type="primary">fabV</name>
    <name type="ordered locus">VC0395_0725</name>
    <name type="ordered locus">VC395_A0531</name>
</gene>
<comment type="function">
    <text evidence="1">Involved in the final reduction of the elongation cycle of fatty acid synthesis (FAS II). Catalyzes the reduction of a carbon-carbon double bond in an enoyl moiety that is covalently linked to an acyl carrier protein (ACP).</text>
</comment>
<comment type="catalytic activity">
    <reaction evidence="1">
        <text>a 2,3-saturated acyl-[ACP] + NAD(+) = a (2E)-enoyl-[ACP] + NADH + H(+)</text>
        <dbReference type="Rhea" id="RHEA:10240"/>
        <dbReference type="Rhea" id="RHEA-COMP:9925"/>
        <dbReference type="Rhea" id="RHEA-COMP:9926"/>
        <dbReference type="ChEBI" id="CHEBI:15378"/>
        <dbReference type="ChEBI" id="CHEBI:57540"/>
        <dbReference type="ChEBI" id="CHEBI:57945"/>
        <dbReference type="ChEBI" id="CHEBI:78784"/>
        <dbReference type="ChEBI" id="CHEBI:78785"/>
        <dbReference type="EC" id="1.3.1.9"/>
    </reaction>
</comment>
<comment type="pathway">
    <text evidence="1">Lipid metabolism; fatty acid biosynthesis.</text>
</comment>
<comment type="subunit">
    <text evidence="1">Monomer.</text>
</comment>
<comment type="similarity">
    <text evidence="1">Belongs to the TER reductase family.</text>
</comment>
<sequence>MHIKPIIQGVVARSAHPYGCEQAVLQQIQYVKQANPIKSGPKRVLILGASSGFGLAARIALTFGGAQADTIGVSFERAPSETQTGSAGYYNNLFFKQHAEQAGRIAVNLEGDVFSVDMREQVIEAIETYFEGEVDLIIYSIASGMRRKPRSEKADPEFWRSAIKPIGEAVSGATLLLENDTWIETTLQPASEEEIEGTLRVMGGDDWENWIDTLINAESLAEGCKTIAFSYMGPDVTHPIYLDGTLGRAKIDLHQTSHALNLKLANFDGGAYAVVCKALVTKASVFIPGLSPYLLALYQVMKNKGTHEGCIEQMQRLFSDKLYGHSRIPLDSERLIRMDDWEMNPDTQVQVRERLQQMNASNFQQLGDYAGFKREFMQLNGFEFDQIDYSQSVDMHNFINKK</sequence>
<dbReference type="EC" id="1.3.1.9" evidence="1"/>
<dbReference type="EMBL" id="CP000626">
    <property type="protein sequence ID" value="ABQ19136.1"/>
    <property type="molecule type" value="Genomic_DNA"/>
</dbReference>
<dbReference type="EMBL" id="CP001236">
    <property type="protein sequence ID" value="ACP11365.1"/>
    <property type="molecule type" value="Genomic_DNA"/>
</dbReference>
<dbReference type="RefSeq" id="WP_000547707.1">
    <property type="nucleotide sequence ID" value="NZ_JAACZH010000025.1"/>
</dbReference>
<dbReference type="SMR" id="A5EZM5"/>
<dbReference type="KEGG" id="vco:VC0395_0725"/>
<dbReference type="KEGG" id="vcr:VC395_A0531"/>
<dbReference type="PATRIC" id="fig|345073.21.peg.3273"/>
<dbReference type="eggNOG" id="COG3007">
    <property type="taxonomic scope" value="Bacteria"/>
</dbReference>
<dbReference type="HOGENOM" id="CLU_057698_1_0_6"/>
<dbReference type="OrthoDB" id="9802260at2"/>
<dbReference type="UniPathway" id="UPA00094"/>
<dbReference type="Proteomes" id="UP000000249">
    <property type="component" value="Chromosome 1"/>
</dbReference>
<dbReference type="GO" id="GO:0004318">
    <property type="term" value="F:enoyl-[acyl-carrier-protein] reductase (NADH) activity"/>
    <property type="evidence" value="ECO:0007669"/>
    <property type="project" value="UniProtKB-UniRule"/>
</dbReference>
<dbReference type="GO" id="GO:0051287">
    <property type="term" value="F:NAD binding"/>
    <property type="evidence" value="ECO:0007669"/>
    <property type="project" value="UniProtKB-UniRule"/>
</dbReference>
<dbReference type="GO" id="GO:0050343">
    <property type="term" value="F:trans-2-enoyl-CoA reductase (NADH) activity"/>
    <property type="evidence" value="ECO:0007669"/>
    <property type="project" value="TreeGrafter"/>
</dbReference>
<dbReference type="GO" id="GO:0006633">
    <property type="term" value="P:fatty acid biosynthetic process"/>
    <property type="evidence" value="ECO:0007669"/>
    <property type="project" value="UniProtKB-UniRule"/>
</dbReference>
<dbReference type="Gene3D" id="3.40.50.720">
    <property type="entry name" value="NAD(P)-binding Rossmann-like Domain"/>
    <property type="match status" value="1"/>
</dbReference>
<dbReference type="HAMAP" id="MF_01838">
    <property type="entry name" value="FabV_reductase"/>
    <property type="match status" value="1"/>
</dbReference>
<dbReference type="InterPro" id="IPR024906">
    <property type="entry name" value="Eno_Rdtase_FAD-bd_dom"/>
</dbReference>
<dbReference type="InterPro" id="IPR024910">
    <property type="entry name" value="Enoyl-CoA_Rdtase_cat_dom"/>
</dbReference>
<dbReference type="InterPro" id="IPR050048">
    <property type="entry name" value="FabV-like_NADH_b"/>
</dbReference>
<dbReference type="InterPro" id="IPR036291">
    <property type="entry name" value="NAD(P)-bd_dom_sf"/>
</dbReference>
<dbReference type="InterPro" id="IPR010758">
    <property type="entry name" value="Trans-2-enoyl-CoA_reductase"/>
</dbReference>
<dbReference type="NCBIfam" id="NF043048">
    <property type="entry name" value="EnoyACPredFabV"/>
    <property type="match status" value="1"/>
</dbReference>
<dbReference type="NCBIfam" id="NF010177">
    <property type="entry name" value="PRK13656.1"/>
    <property type="match status" value="1"/>
</dbReference>
<dbReference type="PANTHER" id="PTHR37480">
    <property type="entry name" value="ENOYL-[ACYL-CARRIER-PROTEIN] REDUCTASE [NADH]"/>
    <property type="match status" value="1"/>
</dbReference>
<dbReference type="PANTHER" id="PTHR37480:SF1">
    <property type="entry name" value="ENOYL-[ACYL-CARRIER-PROTEIN] REDUCTASE [NADH]"/>
    <property type="match status" value="1"/>
</dbReference>
<dbReference type="Pfam" id="PF07055">
    <property type="entry name" value="Eno-Rase_FAD_bd"/>
    <property type="match status" value="1"/>
</dbReference>
<dbReference type="Pfam" id="PF12242">
    <property type="entry name" value="Eno-Rase_NADH_b"/>
    <property type="match status" value="1"/>
</dbReference>
<dbReference type="Pfam" id="PF12241">
    <property type="entry name" value="Enoyl_reductase"/>
    <property type="match status" value="1"/>
</dbReference>
<dbReference type="SUPFAM" id="SSF51735">
    <property type="entry name" value="NAD(P)-binding Rossmann-fold domains"/>
    <property type="match status" value="1"/>
</dbReference>
<evidence type="ECO:0000255" key="1">
    <source>
        <dbReference type="HAMAP-Rule" id="MF_01838"/>
    </source>
</evidence>
<accession>A5EZM5</accession>
<accession>C3M5F2</accession>
<protein>
    <recommendedName>
        <fullName evidence="1">Enoyl-[acyl-carrier-protein] reductase [NADH]</fullName>
        <shortName evidence="1">ENR</shortName>
        <ecNumber evidence="1">1.3.1.9</ecNumber>
    </recommendedName>
</protein>
<organism>
    <name type="scientific">Vibrio cholerae serotype O1 (strain ATCC 39541 / Classical Ogawa 395 / O395)</name>
    <dbReference type="NCBI Taxonomy" id="345073"/>
    <lineage>
        <taxon>Bacteria</taxon>
        <taxon>Pseudomonadati</taxon>
        <taxon>Pseudomonadota</taxon>
        <taxon>Gammaproteobacteria</taxon>
        <taxon>Vibrionales</taxon>
        <taxon>Vibrionaceae</taxon>
        <taxon>Vibrio</taxon>
    </lineage>
</organism>
<keyword id="KW-0275">Fatty acid biosynthesis</keyword>
<keyword id="KW-0276">Fatty acid metabolism</keyword>
<keyword id="KW-0444">Lipid biosynthesis</keyword>
<keyword id="KW-0443">Lipid metabolism</keyword>
<keyword id="KW-0520">NAD</keyword>
<keyword id="KW-0560">Oxidoreductase</keyword>